<reference key="1">
    <citation type="journal article" date="2004" name="Genome Res.">
        <title>The genomic sequence and comparative analysis of the rat major histocompatibility complex.</title>
        <authorList>
            <person name="Hurt P."/>
            <person name="Walter L."/>
            <person name="Sudbrak R."/>
            <person name="Klages S."/>
            <person name="Mueller I."/>
            <person name="Shiina T."/>
            <person name="Inoko H."/>
            <person name="Lehrach H."/>
            <person name="Guenther E."/>
            <person name="Reinhardt R."/>
            <person name="Himmelbauer H."/>
        </authorList>
    </citation>
    <scope>NUCLEOTIDE SEQUENCE [LARGE SCALE GENOMIC DNA]</scope>
    <source>
        <strain>Brown Norway</strain>
    </source>
</reference>
<comment type="function">
    <text evidence="1">Core component of RNA polymerase I (Pol I), a DNA-dependent RNA polymerase which synthesizes ribosomal RNA precursors using the four ribonucleoside triphosphates as substrates. Can mediate Pol I proofreading of the nascent RNA transcript. Anchors into the Pol I active site to monitor transcription fidelity and cleave mis-incorporated 5'-ribonucleotides.</text>
</comment>
<comment type="subunit">
    <text evidence="1">Component of the RNA polymerase I (Pol I) complex consisting of 13 subunits: a ten-subunit catalytic core composed of POLR1A/RPA1, POLR1B/RPA2, POLR1C/RPAC1, POLR1D/RPAC2, POLR1H/RPA12, POLR2E/RPABC1, POLR2F/RPABC2, POLR2H/RPABC3, POLR2K/RPABC4 and POLR2L/RPABC5; a mobile stalk subunit POLR1F/RPA43 protruding from the core and additional subunits homologous to general transcription factors POLR1E/RPA49 and POLR1G/RPA34. Part of Pol I pre-initiation complex (PIC), in which Pol I core assembles with RRN3 and promoter-bound UTBF and SL1/TIF-IB complex.</text>
</comment>
<comment type="subcellular location">
    <subcellularLocation>
        <location evidence="1">Nucleus</location>
        <location evidence="1">Nucleolus</location>
    </subcellularLocation>
</comment>
<comment type="domain">
    <text evidence="1 2">The TFIIS-type zinc-binding beta-ribbon domain contains an acidic hairpin motif (residues Asp-103, Glu-104) that likely coordinates the nucleophilic water and magnesium to cleave the scissile phosphodiester bond and release the mis-incorporated 5'-ribonucleotides.</text>
</comment>
<comment type="similarity">
    <text evidence="5">Belongs to the archaeal RpoM/eukaryotic RPA12/RPB9/RPC11 RNA polymerase family.</text>
</comment>
<gene>
    <name evidence="1" type="primary">Polr1h</name>
    <name evidence="6" type="synonym">Znrd1</name>
</gene>
<feature type="chain" id="PRO_0000121463" description="DNA-directed RNA polymerase I subunit RPA12">
    <location>
        <begin position="1"/>
        <end position="123"/>
    </location>
</feature>
<feature type="zinc finger region" description="C4-type" evidence="1">
    <location>
        <begin position="17"/>
        <end position="38"/>
    </location>
</feature>
<feature type="zinc finger region" description="TFIIS-type" evidence="3">
    <location>
        <begin position="80"/>
        <end position="120"/>
    </location>
</feature>
<feature type="short sequence motif" description="Hairpin" evidence="1 2">
    <location>
        <begin position="103"/>
        <end position="104"/>
    </location>
</feature>
<feature type="binding site" evidence="4">
    <location>
        <position position="17"/>
    </location>
    <ligand>
        <name>Zn(2+)</name>
        <dbReference type="ChEBI" id="CHEBI:29105"/>
        <label>1</label>
    </ligand>
</feature>
<feature type="binding site" evidence="4">
    <location>
        <position position="20"/>
    </location>
    <ligand>
        <name>Zn(2+)</name>
        <dbReference type="ChEBI" id="CHEBI:29105"/>
        <label>1</label>
    </ligand>
</feature>
<feature type="binding site" evidence="4">
    <location>
        <position position="35"/>
    </location>
    <ligand>
        <name>Zn(2+)</name>
        <dbReference type="ChEBI" id="CHEBI:29105"/>
        <label>1</label>
    </ligand>
</feature>
<feature type="binding site" evidence="4">
    <location>
        <position position="38"/>
    </location>
    <ligand>
        <name>Zn(2+)</name>
        <dbReference type="ChEBI" id="CHEBI:29105"/>
        <label>1</label>
    </ligand>
</feature>
<feature type="binding site" evidence="3">
    <location>
        <position position="84"/>
    </location>
    <ligand>
        <name>Zn(2+)</name>
        <dbReference type="ChEBI" id="CHEBI:29105"/>
        <label>2</label>
    </ligand>
</feature>
<feature type="binding site" evidence="3">
    <location>
        <position position="87"/>
    </location>
    <ligand>
        <name>Zn(2+)</name>
        <dbReference type="ChEBI" id="CHEBI:29105"/>
        <label>2</label>
    </ligand>
</feature>
<feature type="binding site" evidence="3">
    <location>
        <position position="112"/>
    </location>
    <ligand>
        <name>Zn(2+)</name>
        <dbReference type="ChEBI" id="CHEBI:29105"/>
        <label>2</label>
    </ligand>
</feature>
<feature type="binding site" evidence="3">
    <location>
        <position position="115"/>
    </location>
    <ligand>
        <name>Zn(2+)</name>
        <dbReference type="ChEBI" id="CHEBI:29105"/>
        <label>2</label>
    </ligand>
</feature>
<accession>Q6MFY5</accession>
<protein>
    <recommendedName>
        <fullName evidence="5">DNA-directed RNA polymerase I subunit RPA12</fullName>
    </recommendedName>
    <alternativeName>
        <fullName evidence="1">DNA-directed RNA polymerase I subunit H</fullName>
    </alternativeName>
    <alternativeName>
        <fullName evidence="6">Zinc ribbon domain-containing protein 1</fullName>
    </alternativeName>
</protein>
<name>RPA12_RAT</name>
<proteinExistence type="inferred from homology"/>
<keyword id="KW-0240">DNA-directed RNA polymerase</keyword>
<keyword id="KW-0479">Metal-binding</keyword>
<keyword id="KW-0539">Nucleus</keyword>
<keyword id="KW-1185">Reference proteome</keyword>
<keyword id="KW-0804">Transcription</keyword>
<keyword id="KW-0862">Zinc</keyword>
<keyword id="KW-0863">Zinc-finger</keyword>
<organism>
    <name type="scientific">Rattus norvegicus</name>
    <name type="common">Rat</name>
    <dbReference type="NCBI Taxonomy" id="10116"/>
    <lineage>
        <taxon>Eukaryota</taxon>
        <taxon>Metazoa</taxon>
        <taxon>Chordata</taxon>
        <taxon>Craniata</taxon>
        <taxon>Vertebrata</taxon>
        <taxon>Euteleostomi</taxon>
        <taxon>Mammalia</taxon>
        <taxon>Eutheria</taxon>
        <taxon>Euarchontoglires</taxon>
        <taxon>Glires</taxon>
        <taxon>Rodentia</taxon>
        <taxon>Myomorpha</taxon>
        <taxon>Muroidea</taxon>
        <taxon>Muridae</taxon>
        <taxon>Murinae</taxon>
        <taxon>Rattus</taxon>
    </lineage>
</organism>
<evidence type="ECO:0000250" key="1">
    <source>
        <dbReference type="UniProtKB" id="Q9P1U0"/>
    </source>
</evidence>
<evidence type="ECO:0000250" key="2">
    <source>
        <dbReference type="UniProtKB" id="Q9Y2Y1"/>
    </source>
</evidence>
<evidence type="ECO:0000255" key="3">
    <source>
        <dbReference type="PROSITE-ProRule" id="PRU00472"/>
    </source>
</evidence>
<evidence type="ECO:0000255" key="4">
    <source>
        <dbReference type="PROSITE-ProRule" id="PRU10145"/>
    </source>
</evidence>
<evidence type="ECO:0000305" key="5"/>
<evidence type="ECO:0000312" key="6">
    <source>
        <dbReference type="RGD" id="1303114"/>
    </source>
</evidence>
<dbReference type="EMBL" id="BX883052">
    <property type="protein sequence ID" value="CAE84062.1"/>
    <property type="molecule type" value="Genomic_DNA"/>
</dbReference>
<dbReference type="RefSeq" id="NP_001159772.1">
    <property type="nucleotide sequence ID" value="NM_001166300.1"/>
</dbReference>
<dbReference type="RefSeq" id="NP_998732.1">
    <property type="nucleotide sequence ID" value="NM_213567.2"/>
</dbReference>
<dbReference type="SMR" id="Q6MFY5"/>
<dbReference type="FunCoup" id="Q6MFY5">
    <property type="interactions" value="2402"/>
</dbReference>
<dbReference type="STRING" id="10116.ENSRNOP00000001012"/>
<dbReference type="PaxDb" id="10116-ENSRNOP00000001012"/>
<dbReference type="Ensembl" id="ENSRNOT00000001012.6">
    <property type="protein sequence ID" value="ENSRNOP00000001012.2"/>
    <property type="gene ID" value="ENSRNOG00000000779.6"/>
</dbReference>
<dbReference type="GeneID" id="361784"/>
<dbReference type="KEGG" id="rno:361784"/>
<dbReference type="UCSC" id="RGD:1303114">
    <property type="organism name" value="rat"/>
</dbReference>
<dbReference type="AGR" id="RGD:1303114"/>
<dbReference type="CTD" id="30834"/>
<dbReference type="RGD" id="1303114">
    <property type="gene designation" value="Polr1h"/>
</dbReference>
<dbReference type="eggNOG" id="KOG2907">
    <property type="taxonomic scope" value="Eukaryota"/>
</dbReference>
<dbReference type="GeneTree" id="ENSGT00390000008126"/>
<dbReference type="HOGENOM" id="CLU_093932_1_2_1"/>
<dbReference type="InParanoid" id="Q6MFY5"/>
<dbReference type="OMA" id="EMQYHTL"/>
<dbReference type="OrthoDB" id="10056816at2759"/>
<dbReference type="PhylomeDB" id="Q6MFY5"/>
<dbReference type="TreeFam" id="TF313881"/>
<dbReference type="Reactome" id="R-RNO-5250924">
    <property type="pathway name" value="B-WICH complex positively regulates rRNA expression"/>
</dbReference>
<dbReference type="Reactome" id="R-RNO-73762">
    <property type="pathway name" value="RNA Polymerase I Transcription Initiation"/>
</dbReference>
<dbReference type="Reactome" id="R-RNO-73772">
    <property type="pathway name" value="RNA Polymerase I Promoter Escape"/>
</dbReference>
<dbReference type="Reactome" id="R-RNO-73863">
    <property type="pathway name" value="RNA Polymerase I Transcription Termination"/>
</dbReference>
<dbReference type="PRO" id="PR:Q6MFY5"/>
<dbReference type="Proteomes" id="UP000002494">
    <property type="component" value="Chromosome 20"/>
</dbReference>
<dbReference type="Bgee" id="ENSRNOG00000000779">
    <property type="expression patterns" value="Expressed in thymus and 20 other cell types or tissues"/>
</dbReference>
<dbReference type="ExpressionAtlas" id="Q6MFY5">
    <property type="expression patterns" value="baseline and differential"/>
</dbReference>
<dbReference type="GO" id="GO:0005736">
    <property type="term" value="C:RNA polymerase I complex"/>
    <property type="evidence" value="ECO:0000266"/>
    <property type="project" value="RGD"/>
</dbReference>
<dbReference type="GO" id="GO:0003899">
    <property type="term" value="F:DNA-directed RNA polymerase activity"/>
    <property type="evidence" value="ECO:0007669"/>
    <property type="project" value="InterPro"/>
</dbReference>
<dbReference type="GO" id="GO:0003676">
    <property type="term" value="F:nucleic acid binding"/>
    <property type="evidence" value="ECO:0007669"/>
    <property type="project" value="InterPro"/>
</dbReference>
<dbReference type="GO" id="GO:0008270">
    <property type="term" value="F:zinc ion binding"/>
    <property type="evidence" value="ECO:0007669"/>
    <property type="project" value="UniProtKB-KW"/>
</dbReference>
<dbReference type="GO" id="GO:0006363">
    <property type="term" value="P:termination of RNA polymerase I transcription"/>
    <property type="evidence" value="ECO:0000318"/>
    <property type="project" value="GO_Central"/>
</dbReference>
<dbReference type="CDD" id="cd10507">
    <property type="entry name" value="Zn-ribbon_RPA12"/>
    <property type="match status" value="1"/>
</dbReference>
<dbReference type="FunFam" id="2.20.25.10:FF:000020">
    <property type="entry name" value="DNA-directed RNA polymerase subunit"/>
    <property type="match status" value="1"/>
</dbReference>
<dbReference type="Gene3D" id="2.20.25.10">
    <property type="match status" value="1"/>
</dbReference>
<dbReference type="InterPro" id="IPR019761">
    <property type="entry name" value="DNA-dir_RNA_pol-M_15_CS"/>
</dbReference>
<dbReference type="InterPro" id="IPR012164">
    <property type="entry name" value="Rpa12/Rpb9/Rpc10/TFS"/>
</dbReference>
<dbReference type="InterPro" id="IPR034004">
    <property type="entry name" value="Zn_ribbon_RPA12_C"/>
</dbReference>
<dbReference type="InterPro" id="IPR001222">
    <property type="entry name" value="Znf_TFIIS"/>
</dbReference>
<dbReference type="PANTHER" id="PTHR11239">
    <property type="entry name" value="DNA-DIRECTED RNA POLYMERASE"/>
    <property type="match status" value="1"/>
</dbReference>
<dbReference type="PANTHER" id="PTHR11239:SF14">
    <property type="entry name" value="DNA-DIRECTED RNA POLYMERASE I SUBUNIT RPA12"/>
    <property type="match status" value="1"/>
</dbReference>
<dbReference type="Pfam" id="PF01096">
    <property type="entry name" value="Zn_ribbon_TFIIS"/>
    <property type="match status" value="1"/>
</dbReference>
<dbReference type="PIRSF" id="PIRSF005586">
    <property type="entry name" value="RNApol_RpoM"/>
    <property type="match status" value="1"/>
</dbReference>
<dbReference type="SMART" id="SM00440">
    <property type="entry name" value="ZnF_C2C2"/>
    <property type="match status" value="1"/>
</dbReference>
<dbReference type="SUPFAM" id="SSF57783">
    <property type="entry name" value="Zinc beta-ribbon"/>
    <property type="match status" value="1"/>
</dbReference>
<dbReference type="PROSITE" id="PS01030">
    <property type="entry name" value="RNA_POL_M_15KD"/>
    <property type="match status" value="1"/>
</dbReference>
<dbReference type="PROSITE" id="PS00466">
    <property type="entry name" value="ZF_TFIIS_1"/>
    <property type="match status" value="1"/>
</dbReference>
<dbReference type="PROSITE" id="PS51133">
    <property type="entry name" value="ZF_TFIIS_2"/>
    <property type="match status" value="1"/>
</dbReference>
<sequence length="123" mass="13586">MELARPCSNFQSDLDFCPDCGSVLPLPGVQDTVICPRCGFSIDVRDFGGKVVKTSVVFNKLGTVIPMSVDEGPESQGPVVDRRCSRCGHEGMAYYTRQMRSADEGQTVFYTCINCKFQEKEDS</sequence>